<gene>
    <name type="primary">Znf394</name>
    <name type="synonym">Rlzfy</name>
    <name type="synonym">Zfp394</name>
    <name type="synonym">Zfp94</name>
    <name type="synonym">Zfp99</name>
</gene>
<feature type="chain" id="PRO_0000047560" description="Zinc finger protein 394">
    <location>
        <begin position="1"/>
        <end position="536"/>
    </location>
</feature>
<feature type="domain" description="SCAN box" evidence="3">
    <location>
        <begin position="44"/>
        <end position="126"/>
    </location>
</feature>
<feature type="domain" description="KRAB">
    <location>
        <begin position="135"/>
        <end position="196"/>
    </location>
</feature>
<feature type="zinc finger region" description="C2H2-type 1" evidence="2">
    <location>
        <begin position="328"/>
        <end position="350"/>
    </location>
</feature>
<feature type="zinc finger region" description="C2H2-type 2" evidence="2">
    <location>
        <begin position="356"/>
        <end position="378"/>
    </location>
</feature>
<feature type="zinc finger region" description="C2H2-type 3" evidence="2">
    <location>
        <begin position="384"/>
        <end position="406"/>
    </location>
</feature>
<feature type="zinc finger region" description="C2H2-type 4; atypical" evidence="2">
    <location>
        <begin position="412"/>
        <end position="433"/>
    </location>
</feature>
<feature type="zinc finger region" description="C2H2-type 5" evidence="2">
    <location>
        <begin position="439"/>
        <end position="461"/>
    </location>
</feature>
<feature type="zinc finger region" description="C2H2-type 6" evidence="2">
    <location>
        <begin position="467"/>
        <end position="489"/>
    </location>
</feature>
<feature type="zinc finger region" description="C2H2-type 7" evidence="2">
    <location>
        <begin position="495"/>
        <end position="517"/>
    </location>
</feature>
<feature type="region of interest" description="Disordered" evidence="4">
    <location>
        <begin position="18"/>
        <end position="45"/>
    </location>
</feature>
<feature type="compositionally biased region" description="Polar residues" evidence="4">
    <location>
        <begin position="26"/>
        <end position="41"/>
    </location>
</feature>
<feature type="cross-link" description="Glycyl lysine isopeptide (Lys-Gly) (interchain with G-Cter in SUMO2)" evidence="1">
    <location>
        <position position="20"/>
    </location>
</feature>
<feature type="cross-link" description="Glycyl lysine isopeptide (Lys-Gly) (interchain with G-Cter in SUMO2)" evidence="1">
    <location>
        <position position="207"/>
    </location>
</feature>
<feature type="cross-link" description="Glycyl lysine isopeptide (Lys-Gly) (interchain with G-Cter in SUMO2)" evidence="1">
    <location>
        <position position="260"/>
    </location>
</feature>
<feature type="cross-link" description="Glycyl lysine isopeptide (Lys-Gly) (interchain with G-Cter in SUMO2)" evidence="1">
    <location>
        <position position="413"/>
    </location>
</feature>
<sequence length="536" mass="60987">MAAGSGVAPPPLGVGLCAVKVEEDSPGSQEPSGSGDWQNPETSRKQFRQLRYQEVAGPEEALSRLWELCRRWLRPELRSKEQIMELLVLEQFLTILPRELQAYVRDHCPESGEEAAALARTLQRALDGASLQSFATFKDVAESLTWEEWEQLAAARKGFCRESTKDPGSTVGPGLETKAVTTDVILKQEMSKEAESQAWLQEVSQGKVPVFTKCGDTWEDWEERLPKAAELLPLQSSPEEQGRTAIPHLLGVSKDESDSKDNEFENSGSLVLGQHIQTAEGLVTNGECGEDHKQGLHAKCHTVKPHSSVDNALGLLESQRHFQEGRPYKCDNCEKRFRQRSDLFKHQRTHTGEKPYQCQECGKSFSQSAALVKHQRTHTGEKPYACPECGECFRQSSHLSRHQRTHGSEKYCKCEECGEIFHISSLFKHQRLHKGERPHKCEVCEKSFKQRSDLFKHQRIHTGEKPYMCFVCERRFSQSATLIKHQRTHTGEKPYKCFQCGERFRQSTHLVRHQRIHHNSVSGLRVEKQHGNLLSW</sequence>
<evidence type="ECO:0000250" key="1">
    <source>
        <dbReference type="UniProtKB" id="Q53GI3"/>
    </source>
</evidence>
<evidence type="ECO:0000255" key="2">
    <source>
        <dbReference type="PROSITE-ProRule" id="PRU00042"/>
    </source>
</evidence>
<evidence type="ECO:0000255" key="3">
    <source>
        <dbReference type="PROSITE-ProRule" id="PRU00187"/>
    </source>
</evidence>
<evidence type="ECO:0000256" key="4">
    <source>
        <dbReference type="SAM" id="MobiDB-lite"/>
    </source>
</evidence>
<evidence type="ECO:0000305" key="5"/>
<organism>
    <name type="scientific">Rattus norvegicus</name>
    <name type="common">Rat</name>
    <dbReference type="NCBI Taxonomy" id="10116"/>
    <lineage>
        <taxon>Eukaryota</taxon>
        <taxon>Metazoa</taxon>
        <taxon>Chordata</taxon>
        <taxon>Craniata</taxon>
        <taxon>Vertebrata</taxon>
        <taxon>Euteleostomi</taxon>
        <taxon>Mammalia</taxon>
        <taxon>Eutheria</taxon>
        <taxon>Euarchontoglires</taxon>
        <taxon>Glires</taxon>
        <taxon>Rodentia</taxon>
        <taxon>Myomorpha</taxon>
        <taxon>Muroidea</taxon>
        <taxon>Muridae</taxon>
        <taxon>Murinae</taxon>
        <taxon>Rattus</taxon>
    </lineage>
</organism>
<accession>Q9Z2K3</accession>
<protein>
    <recommendedName>
        <fullName>Zinc finger protein 394</fullName>
    </recommendedName>
    <alternativeName>
        <fullName>RLZF-Y</fullName>
    </alternativeName>
    <alternativeName>
        <fullName>Zinc finger protein 94</fullName>
        <shortName>Zfp-94</shortName>
    </alternativeName>
    <alternativeName>
        <fullName>Zinc finger protein Y1</fullName>
    </alternativeName>
</protein>
<dbReference type="EMBL" id="AF052042">
    <property type="protein sequence ID" value="AAC78780.1"/>
    <property type="molecule type" value="mRNA"/>
</dbReference>
<dbReference type="RefSeq" id="NP_663776.1">
    <property type="nucleotide sequence ID" value="NM_145724.1"/>
</dbReference>
<dbReference type="SMR" id="Q9Z2K3"/>
<dbReference type="FunCoup" id="Q9Z2K3">
    <property type="interactions" value="355"/>
</dbReference>
<dbReference type="STRING" id="10116.ENSRNOP00000001302"/>
<dbReference type="PhosphoSitePlus" id="Q9Z2K3"/>
<dbReference type="PaxDb" id="10116-ENSRNOP00000001302"/>
<dbReference type="GeneID" id="252860"/>
<dbReference type="KEGG" id="rno:252860"/>
<dbReference type="AGR" id="RGD:628654"/>
<dbReference type="CTD" id="252860"/>
<dbReference type="RGD" id="628654">
    <property type="gene designation" value="Zfp394"/>
</dbReference>
<dbReference type="eggNOG" id="KOG1721">
    <property type="taxonomic scope" value="Eukaryota"/>
</dbReference>
<dbReference type="InParanoid" id="Q9Z2K3"/>
<dbReference type="PhylomeDB" id="Q9Z2K3"/>
<dbReference type="Reactome" id="R-RNO-212436">
    <property type="pathway name" value="Generic Transcription Pathway"/>
</dbReference>
<dbReference type="PRO" id="PR:Q9Z2K3"/>
<dbReference type="Proteomes" id="UP000002494">
    <property type="component" value="Unplaced"/>
</dbReference>
<dbReference type="GO" id="GO:0005634">
    <property type="term" value="C:nucleus"/>
    <property type="evidence" value="ECO:0007669"/>
    <property type="project" value="UniProtKB-SubCell"/>
</dbReference>
<dbReference type="GO" id="GO:0000981">
    <property type="term" value="F:DNA-binding transcription factor activity, RNA polymerase II-specific"/>
    <property type="evidence" value="ECO:0000318"/>
    <property type="project" value="GO_Central"/>
</dbReference>
<dbReference type="GO" id="GO:0000978">
    <property type="term" value="F:RNA polymerase II cis-regulatory region sequence-specific DNA binding"/>
    <property type="evidence" value="ECO:0000318"/>
    <property type="project" value="GO_Central"/>
</dbReference>
<dbReference type="GO" id="GO:0008270">
    <property type="term" value="F:zinc ion binding"/>
    <property type="evidence" value="ECO:0007669"/>
    <property type="project" value="UniProtKB-KW"/>
</dbReference>
<dbReference type="GO" id="GO:0006357">
    <property type="term" value="P:regulation of transcription by RNA polymerase II"/>
    <property type="evidence" value="ECO:0000318"/>
    <property type="project" value="GO_Central"/>
</dbReference>
<dbReference type="CDD" id="cd07765">
    <property type="entry name" value="KRAB_A-box"/>
    <property type="match status" value="1"/>
</dbReference>
<dbReference type="CDD" id="cd07936">
    <property type="entry name" value="SCAN"/>
    <property type="match status" value="1"/>
</dbReference>
<dbReference type="FunFam" id="3.30.160.60:FF:000250">
    <property type="entry name" value="zinc finger protein 197 isoform X1"/>
    <property type="match status" value="2"/>
</dbReference>
<dbReference type="FunFam" id="1.10.4020.10:FF:000001">
    <property type="entry name" value="zinc finger protein 263 isoform X1"/>
    <property type="match status" value="1"/>
</dbReference>
<dbReference type="FunFam" id="3.30.160.60:FF:002343">
    <property type="entry name" value="Zinc finger protein 33A"/>
    <property type="match status" value="1"/>
</dbReference>
<dbReference type="FunFam" id="3.30.160.60:FF:001234">
    <property type="entry name" value="Zinc finger protein 394"/>
    <property type="match status" value="2"/>
</dbReference>
<dbReference type="FunFam" id="3.30.160.60:FF:000990">
    <property type="entry name" value="zinc finger protein 629 isoform X2"/>
    <property type="match status" value="1"/>
</dbReference>
<dbReference type="Gene3D" id="3.30.160.60">
    <property type="entry name" value="Classic Zinc Finger"/>
    <property type="match status" value="7"/>
</dbReference>
<dbReference type="Gene3D" id="1.10.4020.10">
    <property type="entry name" value="DNA breaking-rejoining enzymes"/>
    <property type="match status" value="1"/>
</dbReference>
<dbReference type="InterPro" id="IPR001909">
    <property type="entry name" value="KRAB"/>
</dbReference>
<dbReference type="InterPro" id="IPR036051">
    <property type="entry name" value="KRAB_dom_sf"/>
</dbReference>
<dbReference type="InterPro" id="IPR003309">
    <property type="entry name" value="SCAN_dom"/>
</dbReference>
<dbReference type="InterPro" id="IPR038269">
    <property type="entry name" value="SCAN_sf"/>
</dbReference>
<dbReference type="InterPro" id="IPR036236">
    <property type="entry name" value="Znf_C2H2_sf"/>
</dbReference>
<dbReference type="InterPro" id="IPR013087">
    <property type="entry name" value="Znf_C2H2_type"/>
</dbReference>
<dbReference type="PANTHER" id="PTHR23226:SF416">
    <property type="entry name" value="FI01424P"/>
    <property type="match status" value="1"/>
</dbReference>
<dbReference type="PANTHER" id="PTHR23226">
    <property type="entry name" value="ZINC FINGER AND SCAN DOMAIN-CONTAINING"/>
    <property type="match status" value="1"/>
</dbReference>
<dbReference type="Pfam" id="PF01352">
    <property type="entry name" value="KRAB"/>
    <property type="match status" value="1"/>
</dbReference>
<dbReference type="Pfam" id="PF02023">
    <property type="entry name" value="SCAN"/>
    <property type="match status" value="1"/>
</dbReference>
<dbReference type="Pfam" id="PF00096">
    <property type="entry name" value="zf-C2H2"/>
    <property type="match status" value="6"/>
</dbReference>
<dbReference type="SMART" id="SM00349">
    <property type="entry name" value="KRAB"/>
    <property type="match status" value="1"/>
</dbReference>
<dbReference type="SMART" id="SM00431">
    <property type="entry name" value="SCAN"/>
    <property type="match status" value="1"/>
</dbReference>
<dbReference type="SMART" id="SM00355">
    <property type="entry name" value="ZnF_C2H2"/>
    <property type="match status" value="7"/>
</dbReference>
<dbReference type="SUPFAM" id="SSF57667">
    <property type="entry name" value="beta-beta-alpha zinc fingers"/>
    <property type="match status" value="4"/>
</dbReference>
<dbReference type="SUPFAM" id="SSF109640">
    <property type="entry name" value="KRAB domain (Kruppel-associated box)"/>
    <property type="match status" value="1"/>
</dbReference>
<dbReference type="SUPFAM" id="SSF47353">
    <property type="entry name" value="Retrovirus capsid dimerization domain-like"/>
    <property type="match status" value="1"/>
</dbReference>
<dbReference type="PROSITE" id="PS50804">
    <property type="entry name" value="SCAN_BOX"/>
    <property type="match status" value="1"/>
</dbReference>
<dbReference type="PROSITE" id="PS00028">
    <property type="entry name" value="ZINC_FINGER_C2H2_1"/>
    <property type="match status" value="6"/>
</dbReference>
<dbReference type="PROSITE" id="PS50157">
    <property type="entry name" value="ZINC_FINGER_C2H2_2"/>
    <property type="match status" value="7"/>
</dbReference>
<proteinExistence type="evidence at transcript level"/>
<keyword id="KW-0238">DNA-binding</keyword>
<keyword id="KW-1017">Isopeptide bond</keyword>
<keyword id="KW-0479">Metal-binding</keyword>
<keyword id="KW-0539">Nucleus</keyword>
<keyword id="KW-1185">Reference proteome</keyword>
<keyword id="KW-0677">Repeat</keyword>
<keyword id="KW-0804">Transcription</keyword>
<keyword id="KW-0805">Transcription regulation</keyword>
<keyword id="KW-0832">Ubl conjugation</keyword>
<keyword id="KW-0862">Zinc</keyword>
<keyword id="KW-0863">Zinc-finger</keyword>
<name>ZN394_RAT</name>
<reference key="1">
    <citation type="journal article" date="1998" name="Biochim. Biophys. Acta">
        <title>Isolation, cloning, and characterization of a novel rat lung zinc finger gene, RLZF-Y.</title>
        <authorList>
            <person name="Dovat S."/>
            <person name="Gilbert K.A."/>
            <person name="Petrovic-Dovat L."/>
            <person name="Rannels D.E."/>
        </authorList>
    </citation>
    <scope>NUCLEOTIDE SEQUENCE [MRNA]</scope>
    <source>
        <strain>Sprague-Dawley</strain>
        <tissue>Lung</tissue>
    </source>
</reference>
<comment type="function">
    <text>May be involved in transcriptional regulation.</text>
</comment>
<comment type="subcellular location">
    <subcellularLocation>
        <location evidence="3">Nucleus</location>
    </subcellularLocation>
</comment>
<comment type="similarity">
    <text evidence="5">Belongs to the krueppel C2H2-type zinc-finger protein family.</text>
</comment>